<evidence type="ECO:0000255" key="1">
    <source>
        <dbReference type="HAMAP-Rule" id="MF_01321"/>
    </source>
</evidence>
<geneLocation type="chloroplast"/>
<protein>
    <recommendedName>
        <fullName evidence="1">DNA-directed RNA polymerase subunit beta</fullName>
        <ecNumber evidence="1">2.7.7.6</ecNumber>
    </recommendedName>
    <alternativeName>
        <fullName evidence="1">PEP</fullName>
    </alternativeName>
    <alternativeName>
        <fullName evidence="1">Plastid-encoded RNA polymerase subunit beta</fullName>
        <shortName evidence="1">RNA polymerase subunit beta</shortName>
    </alternativeName>
</protein>
<comment type="function">
    <text evidence="1">DNA-dependent RNA polymerase catalyzes the transcription of DNA into RNA using the four ribonucleoside triphosphates as substrates.</text>
</comment>
<comment type="catalytic activity">
    <reaction evidence="1">
        <text>RNA(n) + a ribonucleoside 5'-triphosphate = RNA(n+1) + diphosphate</text>
        <dbReference type="Rhea" id="RHEA:21248"/>
        <dbReference type="Rhea" id="RHEA-COMP:14527"/>
        <dbReference type="Rhea" id="RHEA-COMP:17342"/>
        <dbReference type="ChEBI" id="CHEBI:33019"/>
        <dbReference type="ChEBI" id="CHEBI:61557"/>
        <dbReference type="ChEBI" id="CHEBI:140395"/>
        <dbReference type="EC" id="2.7.7.6"/>
    </reaction>
</comment>
<comment type="subunit">
    <text evidence="1">In plastids the minimal PEP RNA polymerase catalytic core is composed of four subunits: alpha, beta, beta', and beta''. When a (nuclear-encoded) sigma factor is associated with the core the holoenzyme is formed, which can initiate transcription.</text>
</comment>
<comment type="subcellular location">
    <subcellularLocation>
        <location>Plastid</location>
        <location>Chloroplast</location>
    </subcellularLocation>
</comment>
<comment type="similarity">
    <text evidence="1">Belongs to the RNA polymerase beta chain family.</text>
</comment>
<proteinExistence type="inferred from homology"/>
<gene>
    <name evidence="1" type="primary">rpoB</name>
</gene>
<reference key="1">
    <citation type="submission" date="2007-03" db="EMBL/GenBank/DDBJ databases">
        <title>Sequencing analysis of Draba nemoroza chloroplast DNA.</title>
        <authorList>
            <person name="Hosouchi T."/>
            <person name="Tsuruoka H."/>
            <person name="Kotani H."/>
        </authorList>
    </citation>
    <scope>NUCLEOTIDE SEQUENCE [LARGE SCALE GENOMIC DNA]</scope>
</reference>
<name>RPOB_DRANE</name>
<feature type="chain" id="PRO_0000300441" description="DNA-directed RNA polymerase subunit beta">
    <location>
        <begin position="1"/>
        <end position="1072"/>
    </location>
</feature>
<keyword id="KW-0150">Chloroplast</keyword>
<keyword id="KW-0240">DNA-directed RNA polymerase</keyword>
<keyword id="KW-0548">Nucleotidyltransferase</keyword>
<keyword id="KW-0934">Plastid</keyword>
<keyword id="KW-0804">Transcription</keyword>
<keyword id="KW-0808">Transferase</keyword>
<dbReference type="EC" id="2.7.7.6" evidence="1"/>
<dbReference type="EMBL" id="AP009373">
    <property type="protein sequence ID" value="BAF50366.1"/>
    <property type="molecule type" value="Genomic_DNA"/>
</dbReference>
<dbReference type="RefSeq" id="YP_001123542.1">
    <property type="nucleotide sequence ID" value="NC_009272.1"/>
</dbReference>
<dbReference type="SMR" id="A4QL11"/>
<dbReference type="GeneID" id="4964786"/>
<dbReference type="GO" id="GO:0009507">
    <property type="term" value="C:chloroplast"/>
    <property type="evidence" value="ECO:0007669"/>
    <property type="project" value="UniProtKB-SubCell"/>
</dbReference>
<dbReference type="GO" id="GO:0000428">
    <property type="term" value="C:DNA-directed RNA polymerase complex"/>
    <property type="evidence" value="ECO:0007669"/>
    <property type="project" value="UniProtKB-KW"/>
</dbReference>
<dbReference type="GO" id="GO:0005739">
    <property type="term" value="C:mitochondrion"/>
    <property type="evidence" value="ECO:0007669"/>
    <property type="project" value="GOC"/>
</dbReference>
<dbReference type="GO" id="GO:0003677">
    <property type="term" value="F:DNA binding"/>
    <property type="evidence" value="ECO:0007669"/>
    <property type="project" value="UniProtKB-UniRule"/>
</dbReference>
<dbReference type="GO" id="GO:0003899">
    <property type="term" value="F:DNA-directed RNA polymerase activity"/>
    <property type="evidence" value="ECO:0007669"/>
    <property type="project" value="UniProtKB-UniRule"/>
</dbReference>
<dbReference type="GO" id="GO:0032549">
    <property type="term" value="F:ribonucleoside binding"/>
    <property type="evidence" value="ECO:0007669"/>
    <property type="project" value="InterPro"/>
</dbReference>
<dbReference type="GO" id="GO:0006351">
    <property type="term" value="P:DNA-templated transcription"/>
    <property type="evidence" value="ECO:0007669"/>
    <property type="project" value="UniProtKB-UniRule"/>
</dbReference>
<dbReference type="CDD" id="cd00653">
    <property type="entry name" value="RNA_pol_B_RPB2"/>
    <property type="match status" value="1"/>
</dbReference>
<dbReference type="FunFam" id="2.40.50.150:FF:000006">
    <property type="entry name" value="DNA-directed RNA polymerase subunit beta"/>
    <property type="match status" value="1"/>
</dbReference>
<dbReference type="FunFam" id="3.90.1110.10:FF:000009">
    <property type="entry name" value="DNA-directed RNA polymerase subunit beta"/>
    <property type="match status" value="1"/>
</dbReference>
<dbReference type="Gene3D" id="2.40.50.100">
    <property type="match status" value="1"/>
</dbReference>
<dbReference type="Gene3D" id="2.40.50.150">
    <property type="match status" value="1"/>
</dbReference>
<dbReference type="Gene3D" id="3.90.1100.10">
    <property type="match status" value="1"/>
</dbReference>
<dbReference type="Gene3D" id="2.30.150.10">
    <property type="entry name" value="DNA-directed RNA polymerase, beta subunit, external 1 domain"/>
    <property type="match status" value="1"/>
</dbReference>
<dbReference type="Gene3D" id="2.40.270.10">
    <property type="entry name" value="DNA-directed RNA polymerase, subunit 2, domain 6"/>
    <property type="match status" value="2"/>
</dbReference>
<dbReference type="Gene3D" id="3.90.1800.10">
    <property type="entry name" value="RNA polymerase alpha subunit dimerisation domain"/>
    <property type="match status" value="1"/>
</dbReference>
<dbReference type="Gene3D" id="3.90.1110.10">
    <property type="entry name" value="RNA polymerase Rpb2, domain 2"/>
    <property type="match status" value="1"/>
</dbReference>
<dbReference type="HAMAP" id="MF_01321">
    <property type="entry name" value="RNApol_bact_RpoB"/>
    <property type="match status" value="1"/>
</dbReference>
<dbReference type="InterPro" id="IPR042107">
    <property type="entry name" value="DNA-dir_RNA_pol_bsu_ext_1_sf"/>
</dbReference>
<dbReference type="InterPro" id="IPR015712">
    <property type="entry name" value="DNA-dir_RNA_pol_su2"/>
</dbReference>
<dbReference type="InterPro" id="IPR007120">
    <property type="entry name" value="DNA-dir_RNAP_su2_dom"/>
</dbReference>
<dbReference type="InterPro" id="IPR037033">
    <property type="entry name" value="DNA-dir_RNAP_su2_hyb_sf"/>
</dbReference>
<dbReference type="InterPro" id="IPR010243">
    <property type="entry name" value="RNA_pol_bsu_bac"/>
</dbReference>
<dbReference type="InterPro" id="IPR007121">
    <property type="entry name" value="RNA_pol_bsu_CS"/>
</dbReference>
<dbReference type="InterPro" id="IPR007642">
    <property type="entry name" value="RNA_pol_Rpb2_2"/>
</dbReference>
<dbReference type="InterPro" id="IPR037034">
    <property type="entry name" value="RNA_pol_Rpb2_2_sf"/>
</dbReference>
<dbReference type="InterPro" id="IPR007645">
    <property type="entry name" value="RNA_pol_Rpb2_3"/>
</dbReference>
<dbReference type="InterPro" id="IPR007641">
    <property type="entry name" value="RNA_pol_Rpb2_7"/>
</dbReference>
<dbReference type="InterPro" id="IPR014724">
    <property type="entry name" value="RNA_pol_RPB2_OB-fold"/>
</dbReference>
<dbReference type="NCBIfam" id="NF001616">
    <property type="entry name" value="PRK00405.1"/>
    <property type="match status" value="1"/>
</dbReference>
<dbReference type="PANTHER" id="PTHR20856">
    <property type="entry name" value="DNA-DIRECTED RNA POLYMERASE I SUBUNIT 2"/>
    <property type="match status" value="1"/>
</dbReference>
<dbReference type="Pfam" id="PF04561">
    <property type="entry name" value="RNA_pol_Rpb2_2"/>
    <property type="match status" value="1"/>
</dbReference>
<dbReference type="Pfam" id="PF04565">
    <property type="entry name" value="RNA_pol_Rpb2_3"/>
    <property type="match status" value="1"/>
</dbReference>
<dbReference type="Pfam" id="PF00562">
    <property type="entry name" value="RNA_pol_Rpb2_6"/>
    <property type="match status" value="1"/>
</dbReference>
<dbReference type="Pfam" id="PF04560">
    <property type="entry name" value="RNA_pol_Rpb2_7"/>
    <property type="match status" value="1"/>
</dbReference>
<dbReference type="SUPFAM" id="SSF64484">
    <property type="entry name" value="beta and beta-prime subunits of DNA dependent RNA-polymerase"/>
    <property type="match status" value="1"/>
</dbReference>
<dbReference type="PROSITE" id="PS01166">
    <property type="entry name" value="RNA_POL_BETA"/>
    <property type="match status" value="1"/>
</dbReference>
<accession>A4QL11</accession>
<sequence length="1072" mass="120871">MLGDGKEGTSTIPGFNQIQFEGFYRFIDQGLIEELSKFPKIEDIDHEIEFQLFVETYQLVEPLIKERDAVYESLTYSSEIYVSAGLIWKTSRNMQEQRIFIGNIPLMNSLGISIVNGIYRIVINQILQSPGIYYQSELDHNGISVYTGTIISDWGGRLELEIDKKARIWARVSRKQKISILVLSSAMGSNLREILENVCYPEIFLSFLTDKEKKKIGSKENAILEFYQQFSCVGGDPIFSESLCKELQKKFFHQRCELGRIGRRNINSRLNLNIPQNNIFLLPRDILAAADHLIGMKFGMGTLDDMNHLKNKRIRSVADLLQDQLGLALARLENVVKGTIGGAIRHKLIPTPQNLVTSTPLTTTYESFFGLHPLSQVLDRTNPLTQIVHGRKLSYLGPGGLTGRTANFRIRDIHPSHYGRICPIDTSEGINVGLIGSLSIHARIGDWGSLESPFYELFCKSKKARIRMLFLSPSQDEYYMIAAGNSLALNRDIQEEQAVPARYRQEFLTIAWEEVHLRSIFPFQYFSIGASLIPFIEHNDANRALMSSNMQRQAVPLSRSEKCIVGTGLERQVALDSGVPAIAEHEGKILSTDTEKIILSGNGNTLSIPLIMYQRSNKNTCMHQKPQVRRGQCIKKGQILADGAATVGGELALGKNILVAYMPWEGYNFEDAVLISECLVYGDIYTSFHIRKYEIQTHVTTQGPERITKEIPHLEGRLLRNLDKNGIVMLGSWVETGDILVGKLTPQMAKESSYAPEDRLLRAILGIQVSTSKETCLKLPIGGRGRVIDVRWVQKKGGSSYNPEIIRVYISQKREIKVGDKVAGRHGNKGIISKILPRQDMPYLQDGRPVDMVFNPLGVPSRMNVGQIFECSLGLAGSLLDRHYRIAPFDERYEQEASRKLVFSELYEASKQTANPWVFEPEYPGKSRIFDGRTGDPFEQPVIIGKPYILKLIHQVDDKIHGRSSGHYALVTQQPLRGRSKQGGQRVGEMEVWALEGFGVAHILQEMLTYKSDHIRARQEVLGTTIIGGTIPKPEDAPESFRLLVRELRSLALELNHFLVSEKNFQINRQEV</sequence>
<organism>
    <name type="scientific">Draba nemorosa</name>
    <name type="common">Woodland whitlowgrass</name>
    <dbReference type="NCBI Taxonomy" id="171822"/>
    <lineage>
        <taxon>Eukaryota</taxon>
        <taxon>Viridiplantae</taxon>
        <taxon>Streptophyta</taxon>
        <taxon>Embryophyta</taxon>
        <taxon>Tracheophyta</taxon>
        <taxon>Spermatophyta</taxon>
        <taxon>Magnoliopsida</taxon>
        <taxon>eudicotyledons</taxon>
        <taxon>Gunneridae</taxon>
        <taxon>Pentapetalae</taxon>
        <taxon>rosids</taxon>
        <taxon>malvids</taxon>
        <taxon>Brassicales</taxon>
        <taxon>Brassicaceae</taxon>
        <taxon>Arabideae</taxon>
        <taxon>Draba</taxon>
    </lineage>
</organism>